<dbReference type="EMBL" id="AF314510">
    <property type="protein sequence ID" value="AAG40294.1"/>
    <property type="molecule type" value="Genomic_DNA"/>
</dbReference>
<dbReference type="SMR" id="Q9EV31"/>
<dbReference type="GO" id="GO:0005576">
    <property type="term" value="C:extracellular region"/>
    <property type="evidence" value="ECO:0007669"/>
    <property type="project" value="UniProtKB-SubCell"/>
</dbReference>
<dbReference type="GO" id="GO:0020002">
    <property type="term" value="C:host cell plasma membrane"/>
    <property type="evidence" value="ECO:0007669"/>
    <property type="project" value="UniProtKB-SubCell"/>
</dbReference>
<dbReference type="GO" id="GO:0016020">
    <property type="term" value="C:membrane"/>
    <property type="evidence" value="ECO:0007669"/>
    <property type="project" value="UniProtKB-KW"/>
</dbReference>
<dbReference type="GO" id="GO:0005509">
    <property type="term" value="F:calcium ion binding"/>
    <property type="evidence" value="ECO:0007669"/>
    <property type="project" value="InterPro"/>
</dbReference>
<dbReference type="GO" id="GO:0015267">
    <property type="term" value="F:channel activity"/>
    <property type="evidence" value="ECO:0007669"/>
    <property type="project" value="InterPro"/>
</dbReference>
<dbReference type="GO" id="GO:0090729">
    <property type="term" value="F:toxin activity"/>
    <property type="evidence" value="ECO:0007669"/>
    <property type="project" value="UniProtKB-KW"/>
</dbReference>
<dbReference type="GO" id="GO:0031640">
    <property type="term" value="P:killing of cells of another organism"/>
    <property type="evidence" value="ECO:0007669"/>
    <property type="project" value="UniProtKB-KW"/>
</dbReference>
<dbReference type="FunFam" id="2.150.10.10:FF:000002">
    <property type="entry name" value="Leukotoxin"/>
    <property type="match status" value="1"/>
</dbReference>
<dbReference type="Gene3D" id="2.150.10.10">
    <property type="entry name" value="Serralysin-like metalloprotease, C-terminal"/>
    <property type="match status" value="1"/>
</dbReference>
<dbReference type="InterPro" id="IPR018511">
    <property type="entry name" value="Hemolysin-typ_Ca-bd_CS"/>
</dbReference>
<dbReference type="InterPro" id="IPR001343">
    <property type="entry name" value="Hemolysn_Ca-bd"/>
</dbReference>
<dbReference type="InterPro" id="IPR013550">
    <property type="entry name" value="RTX_C"/>
</dbReference>
<dbReference type="InterPro" id="IPR018504">
    <property type="entry name" value="RTX_pore_form"/>
</dbReference>
<dbReference type="InterPro" id="IPR050557">
    <property type="entry name" value="RTX_toxin/Mannuronan_C5-epim"/>
</dbReference>
<dbReference type="InterPro" id="IPR003995">
    <property type="entry name" value="RTX_toxin_determinant-A"/>
</dbReference>
<dbReference type="InterPro" id="IPR011049">
    <property type="entry name" value="Serralysin-like_metalloprot_C"/>
</dbReference>
<dbReference type="NCBIfam" id="NF033943">
    <property type="entry name" value="RTX_toxin"/>
    <property type="match status" value="1"/>
</dbReference>
<dbReference type="PANTHER" id="PTHR38340">
    <property type="entry name" value="S-LAYER PROTEIN"/>
    <property type="match status" value="1"/>
</dbReference>
<dbReference type="PANTHER" id="PTHR38340:SF1">
    <property type="entry name" value="S-LAYER PROTEIN"/>
    <property type="match status" value="1"/>
</dbReference>
<dbReference type="Pfam" id="PF00353">
    <property type="entry name" value="HemolysinCabind"/>
    <property type="match status" value="2"/>
</dbReference>
<dbReference type="Pfam" id="PF02382">
    <property type="entry name" value="RTX"/>
    <property type="match status" value="1"/>
</dbReference>
<dbReference type="Pfam" id="PF08339">
    <property type="entry name" value="RTX_C"/>
    <property type="match status" value="1"/>
</dbReference>
<dbReference type="PRINTS" id="PR00313">
    <property type="entry name" value="CABNDNGRPT"/>
</dbReference>
<dbReference type="PRINTS" id="PR01488">
    <property type="entry name" value="RTXTOXINA"/>
</dbReference>
<dbReference type="SUPFAM" id="SSF51120">
    <property type="entry name" value="beta-Roll"/>
    <property type="match status" value="1"/>
</dbReference>
<dbReference type="PROSITE" id="PS00330">
    <property type="entry name" value="HEMOLYSIN_CALCIUM"/>
    <property type="match status" value="4"/>
</dbReference>
<keyword id="KW-0106">Calcium</keyword>
<keyword id="KW-0204">Cytolysis</keyword>
<keyword id="KW-0354">Hemolysis</keyword>
<keyword id="KW-1032">Host cell membrane</keyword>
<keyword id="KW-1043">Host membrane</keyword>
<keyword id="KW-0449">Lipoprotein</keyword>
<keyword id="KW-0472">Membrane</keyword>
<keyword id="KW-0677">Repeat</keyword>
<keyword id="KW-0964">Secreted</keyword>
<keyword id="KW-0800">Toxin</keyword>
<keyword id="KW-0812">Transmembrane</keyword>
<keyword id="KW-1133">Transmembrane helix</keyword>
<keyword id="KW-0843">Virulence</keyword>
<evidence type="ECO:0000250" key="1"/>
<evidence type="ECO:0000255" key="2"/>
<evidence type="ECO:0000305" key="3"/>
<reference key="1">
    <citation type="journal article" date="2001" name="J. Bacteriol.">
        <title>Sequence diversity and molecular evolution of the leukotoxin (lktA) gene in bovine and ovine strains of Mannheimia (Pasteurella) haemolytica.</title>
        <authorList>
            <person name="Davies R.L."/>
            <person name="Whittam T.S."/>
            <person name="Selander R.K."/>
        </authorList>
    </citation>
    <scope>NUCLEOTIDE SEQUENCE [GENOMIC DNA]</scope>
    <source>
        <strain>Serotype A13 / PH588</strain>
    </source>
</reference>
<sequence length="953" mass="102161">MGNKFTNISTNLRNSWLTAKSGLNNAGQSLAKAGQSLKTGAKKIILYIPKDYQYDTEKGNGLQDLVKAAQELGIEVQKEEGNDIAKAQTSLGTIQNVLGLTERGIVLSAPQLDKLLQKTKVGQAIGSAENLTKGFSNAKTVLSGIQSILGSVLAGMDLDEALQKNSNELTLAKAGLELTNSLIENIANSVKTLDAFGDQINQLGSKLQNVKGLSSLGDKLKGLSGFDKTSLGLDVVSGLLSGATAALVLADKNASTSRKVGAGFELANQVVGNITKAVSSYILAQRVAAGLSSTGPVAALIASTVSLAISPLAFAGIADKFNHAKSLESYAERFKKLGYDGDNLLAEYQRGTGTIDASVTAINTALAAIAGGVSAAAAGSVIASPIALLVSGITGVISTILQYSKQAMFEHVANKIHNKIVEWEKNNGGKNYFENGYDARYLANLQDNMKFLLNLNKELQAERVIAITQQQWDSNIGDLAGISRLGEKVLSGKAYVDAFEEGQHLKADKLVQLDSAKGIIDVSNTGEAKTQHILFRTPLLTPGTEKRERVQTGKYEYITKLHINRVDSWQIKDGAASSTFDLTNVVQRIGVELDHAENVIKTKETKIVATLGDGDDNVFVGSGTTEIDGGEGYDRVHYSRGNYGALTIDATKETEQGSYTVNRFVESGKALHEVTSTHTALVGNREEKIEYRHSNNQHHAGYYTKDTLKAVEEIIGTSHNDIFKGSKFNDAFNGGDGVDTIDGNDGNDRLFGGKGDDIIDGGNGDDFIDGGKGNDLLHGGKGDDIFVHRQGDGNDSITESEGNDKLSFSDSNLKDLTFEKVNHHLVITNTKQEKVTIQNWFREAEFAKTIQNYVATRDDKIEEIIGQNGERITSKQVDELIEKGNGKIAQSELTKVVDNYQLLKYSRDASNSLDKLISSASAFTSSNDSRNVLASPTSMLDPSLSSIQFARAA</sequence>
<comment type="function">
    <text evidence="1">Pasteurella leukotoxins are exotoxins that attack host leukocytes and especially polymorphonuclear cells, by causing cell rupture. The leukotoxin binds to the host LFA-1 integrin and induces a signaling cascade leading to many biological effects, including tyrosine phosphorylation of the CD18 tail, elevation of the intracellular Ca(2+) and lysis of the host cell (By similarity). This leukotoxin is a major contributor to the pathogenesis of lung injury in ovine pneumonic pasteurellosis. It also has weak hemolytic activity.</text>
</comment>
<comment type="subcellular location">
    <subcellularLocation>
        <location evidence="1">Secreted</location>
    </subcellularLocation>
    <subcellularLocation>
        <location evidence="1">Host cell membrane</location>
        <topology evidence="1">Multi-pass membrane protein</topology>
    </subcellularLocation>
</comment>
<comment type="domain">
    <text evidence="1">The transmembrane domains are believed to be involved in pore formation in target cells.</text>
</comment>
<comment type="domain">
    <text evidence="1">The Gly-rich region is probably involved in calcium binding, which is required for target cell-binding and cytolytic activity.</text>
</comment>
<comment type="domain">
    <text evidence="1">The C-terminal domain contains an export signal that is recognized by the ABC transporter complex LktBD.</text>
</comment>
<comment type="PTM">
    <text evidence="1">Acylated by LktC. The toxin only becomes active when modified (By similarity).</text>
</comment>
<comment type="miscellaneous">
    <text>The lktCABD operon has a complex mosaic structure that has been derived by extensive inter- and intraspecies horizontal DNA transfer and intragenic recombination events.</text>
</comment>
<comment type="similarity">
    <text evidence="3">Belongs to the RTX prokaryotic toxin (TC 1.C.11) family.</text>
</comment>
<name>LKA13_MANHA</name>
<proteinExistence type="inferred from homology"/>
<protein>
    <recommendedName>
        <fullName>Leukotoxin</fullName>
        <shortName>Lkt</shortName>
    </recommendedName>
</protein>
<feature type="chain" id="PRO_0000196231" description="Leukotoxin">
    <location>
        <begin position="1"/>
        <end position="953"/>
    </location>
</feature>
<feature type="transmembrane region" description="Helical" evidence="2">
    <location>
        <begin position="230"/>
        <end position="250"/>
    </location>
</feature>
<feature type="transmembrane region" description="Helical" evidence="2">
    <location>
        <begin position="297"/>
        <end position="317"/>
    </location>
</feature>
<feature type="transmembrane region" description="Helical" evidence="2">
    <location>
        <begin position="359"/>
        <end position="379"/>
    </location>
</feature>
<feature type="transmembrane region" description="Helical" evidence="2">
    <location>
        <begin position="381"/>
        <end position="401"/>
    </location>
</feature>
<feature type="repeat" description="Hemolysin-type calcium-binding 1">
    <location>
        <begin position="715"/>
        <end position="732"/>
    </location>
</feature>
<feature type="repeat" description="Hemolysin-type calcium-binding 2">
    <location>
        <begin position="733"/>
        <end position="750"/>
    </location>
</feature>
<feature type="repeat" description="Hemolysin-type calcium-binding 3">
    <location>
        <begin position="751"/>
        <end position="768"/>
    </location>
</feature>
<feature type="repeat" description="Hemolysin-type calcium-binding 4">
    <location>
        <begin position="769"/>
        <end position="786"/>
    </location>
</feature>
<feature type="repeat" description="Hemolysin-type calcium-binding 5">
    <location>
        <begin position="789"/>
        <end position="806"/>
    </location>
</feature>
<organism>
    <name type="scientific">Mannheimia haemolytica</name>
    <name type="common">Pasteurella haemolytica</name>
    <dbReference type="NCBI Taxonomy" id="75985"/>
    <lineage>
        <taxon>Bacteria</taxon>
        <taxon>Pseudomonadati</taxon>
        <taxon>Pseudomonadota</taxon>
        <taxon>Gammaproteobacteria</taxon>
        <taxon>Pasteurellales</taxon>
        <taxon>Pasteurellaceae</taxon>
        <taxon>Mannheimia</taxon>
    </lineage>
</organism>
<accession>Q9EV31</accession>
<gene>
    <name type="primary">lktA</name>
</gene>